<reference key="1">
    <citation type="submission" date="2002-12" db="EMBL/GenBank/DDBJ databases">
        <title>Complete genome sequence of Vibrio vulnificus CMCP6.</title>
        <authorList>
            <person name="Rhee J.H."/>
            <person name="Kim S.Y."/>
            <person name="Chung S.S."/>
            <person name="Kim J.J."/>
            <person name="Moon Y.H."/>
            <person name="Jeong H."/>
            <person name="Choy H.E."/>
        </authorList>
    </citation>
    <scope>NUCLEOTIDE SEQUENCE [LARGE SCALE GENOMIC DNA]</scope>
    <source>
        <strain>CMCP6</strain>
    </source>
</reference>
<accession>Q8DDU4</accession>
<feature type="chain" id="PRO_0000204498" description="Pimeloyl-[acyl-carrier protein] methyl ester esterase">
    <location>
        <begin position="1"/>
        <end position="255"/>
    </location>
</feature>
<feature type="domain" description="AB hydrolase-1" evidence="1">
    <location>
        <begin position="16"/>
        <end position="242"/>
    </location>
</feature>
<feature type="active site" description="Nucleophile" evidence="2">
    <location>
        <position position="82"/>
    </location>
</feature>
<feature type="active site" evidence="2">
    <location>
        <position position="207"/>
    </location>
</feature>
<feature type="active site" evidence="2">
    <location>
        <position position="235"/>
    </location>
</feature>
<feature type="binding site" evidence="2">
    <location>
        <position position="22"/>
    </location>
    <ligand>
        <name>substrate</name>
    </ligand>
</feature>
<feature type="binding site" evidence="2">
    <location>
        <begin position="82"/>
        <end position="83"/>
    </location>
    <ligand>
        <name>substrate</name>
    </ligand>
</feature>
<feature type="binding site" evidence="2">
    <location>
        <begin position="143"/>
        <end position="147"/>
    </location>
    <ligand>
        <name>substrate</name>
    </ligand>
</feature>
<feature type="binding site" evidence="2">
    <location>
        <position position="235"/>
    </location>
    <ligand>
        <name>substrate</name>
    </ligand>
</feature>
<comment type="function">
    <text evidence="2">The physiological role of BioH is to remove the methyl group introduced by BioC when the pimeloyl moiety is complete. It allows to synthesize pimeloyl-ACP via the fatty acid synthetic pathway through the hydrolysis of the ester bonds of pimeloyl-ACP esters.</text>
</comment>
<comment type="catalytic activity">
    <reaction evidence="2">
        <text>6-carboxyhexanoyl-[ACP] methyl ester + H2O = 6-carboxyhexanoyl-[ACP] + methanol + H(+)</text>
        <dbReference type="Rhea" id="RHEA:42700"/>
        <dbReference type="Rhea" id="RHEA-COMP:9955"/>
        <dbReference type="Rhea" id="RHEA-COMP:10186"/>
        <dbReference type="ChEBI" id="CHEBI:15377"/>
        <dbReference type="ChEBI" id="CHEBI:15378"/>
        <dbReference type="ChEBI" id="CHEBI:17790"/>
        <dbReference type="ChEBI" id="CHEBI:78846"/>
        <dbReference type="ChEBI" id="CHEBI:82735"/>
        <dbReference type="EC" id="3.1.1.85"/>
    </reaction>
</comment>
<comment type="pathway">
    <text evidence="2">Cofactor biosynthesis; biotin biosynthesis.</text>
</comment>
<comment type="subunit">
    <text evidence="2">Monomer.</text>
</comment>
<comment type="subcellular location">
    <subcellularLocation>
        <location evidence="2">Cytoplasm</location>
    </subcellularLocation>
</comment>
<comment type="similarity">
    <text evidence="2">Belongs to the AB hydrolase superfamily. Carboxylesterase BioH family.</text>
</comment>
<organism>
    <name type="scientific">Vibrio vulnificus (strain CMCP6)</name>
    <dbReference type="NCBI Taxonomy" id="216895"/>
    <lineage>
        <taxon>Bacteria</taxon>
        <taxon>Pseudomonadati</taxon>
        <taxon>Pseudomonadota</taxon>
        <taxon>Gammaproteobacteria</taxon>
        <taxon>Vibrionales</taxon>
        <taxon>Vibrionaceae</taxon>
        <taxon>Vibrio</taxon>
    </lineage>
</organism>
<keyword id="KW-0093">Biotin biosynthesis</keyword>
<keyword id="KW-0963">Cytoplasm</keyword>
<keyword id="KW-0378">Hydrolase</keyword>
<keyword id="KW-0719">Serine esterase</keyword>
<evidence type="ECO:0000255" key="1"/>
<evidence type="ECO:0000255" key="2">
    <source>
        <dbReference type="HAMAP-Rule" id="MF_01260"/>
    </source>
</evidence>
<proteinExistence type="inferred from homology"/>
<protein>
    <recommendedName>
        <fullName evidence="2">Pimeloyl-[acyl-carrier protein] methyl ester esterase</fullName>
        <ecNumber evidence="2">3.1.1.85</ecNumber>
    </recommendedName>
    <alternativeName>
        <fullName evidence="2">Biotin synthesis protein BioH</fullName>
    </alternativeName>
    <alternativeName>
        <fullName evidence="2">Carboxylesterase BioH</fullName>
    </alternativeName>
</protein>
<name>BIOH_VIBVU</name>
<dbReference type="EC" id="3.1.1.85" evidence="2"/>
<dbReference type="EMBL" id="AE016795">
    <property type="protein sequence ID" value="AAO09365.1"/>
    <property type="molecule type" value="Genomic_DNA"/>
</dbReference>
<dbReference type="RefSeq" id="WP_011078929.1">
    <property type="nucleotide sequence ID" value="NC_004459.3"/>
</dbReference>
<dbReference type="SMR" id="Q8DDU4"/>
<dbReference type="ESTHER" id="vibvu-VV10862">
    <property type="family name" value="BioH"/>
</dbReference>
<dbReference type="KEGG" id="vvu:VV1_0862"/>
<dbReference type="HOGENOM" id="CLU_020336_12_2_6"/>
<dbReference type="UniPathway" id="UPA00078"/>
<dbReference type="Proteomes" id="UP000002275">
    <property type="component" value="Chromosome 1"/>
</dbReference>
<dbReference type="GO" id="GO:0005737">
    <property type="term" value="C:cytoplasm"/>
    <property type="evidence" value="ECO:0007669"/>
    <property type="project" value="UniProtKB-SubCell"/>
</dbReference>
<dbReference type="GO" id="GO:0016020">
    <property type="term" value="C:membrane"/>
    <property type="evidence" value="ECO:0007669"/>
    <property type="project" value="TreeGrafter"/>
</dbReference>
<dbReference type="GO" id="GO:0090499">
    <property type="term" value="F:pimelyl-[acyl-carrier protein] methyl ester esterase activity"/>
    <property type="evidence" value="ECO:0007669"/>
    <property type="project" value="UniProtKB-EC"/>
</dbReference>
<dbReference type="GO" id="GO:0009102">
    <property type="term" value="P:biotin biosynthetic process"/>
    <property type="evidence" value="ECO:0007669"/>
    <property type="project" value="UniProtKB-UniRule"/>
</dbReference>
<dbReference type="Gene3D" id="3.40.50.1820">
    <property type="entry name" value="alpha/beta hydrolase"/>
    <property type="match status" value="1"/>
</dbReference>
<dbReference type="HAMAP" id="MF_01260">
    <property type="entry name" value="Carboxylester"/>
    <property type="match status" value="1"/>
</dbReference>
<dbReference type="InterPro" id="IPR000073">
    <property type="entry name" value="AB_hydrolase_1"/>
</dbReference>
<dbReference type="InterPro" id="IPR029058">
    <property type="entry name" value="AB_hydrolase_fold"/>
</dbReference>
<dbReference type="InterPro" id="IPR050266">
    <property type="entry name" value="AB_hydrolase_sf"/>
</dbReference>
<dbReference type="InterPro" id="IPR010076">
    <property type="entry name" value="BioH"/>
</dbReference>
<dbReference type="NCBIfam" id="TIGR01738">
    <property type="entry name" value="bioH"/>
    <property type="match status" value="1"/>
</dbReference>
<dbReference type="PANTHER" id="PTHR43798:SF31">
    <property type="entry name" value="AB HYDROLASE SUPERFAMILY PROTEIN YCLE"/>
    <property type="match status" value="1"/>
</dbReference>
<dbReference type="PANTHER" id="PTHR43798">
    <property type="entry name" value="MONOACYLGLYCEROL LIPASE"/>
    <property type="match status" value="1"/>
</dbReference>
<dbReference type="Pfam" id="PF00561">
    <property type="entry name" value="Abhydrolase_1"/>
    <property type="match status" value="1"/>
</dbReference>
<dbReference type="SUPFAM" id="SSF53474">
    <property type="entry name" value="alpha/beta-Hydrolases"/>
    <property type="match status" value="1"/>
</dbReference>
<gene>
    <name evidence="2" type="primary">bioH</name>
    <name type="ordered locus">VV1_0862</name>
</gene>
<sequence>MSTDLHWQTQGQGPDLVLLHGWGMNGAVWQQVVERLELHFRLHVVDLPGYGHSAHLHAASLEEIAQQLLEHAPKQAIWVGWSLGGLVATHMALHHADYVSKLVTVASSPKFAAEARWRGIQPQVLSAFTEQLSEDFHTTVERFMALQAMGSPSARQDVKNLKQAVFSRPQPNPQSLLAGLQMLAEVDLRDHLPHLTMPMLRLYGRLDGLVPIKVAQDLEKVLPASEQFIFTQSSHAPFITEPESFCHQLLSFAGK</sequence>